<name>ISPG_SYMTH</name>
<dbReference type="EC" id="1.17.7.3" evidence="1"/>
<dbReference type="EMBL" id="AP006840">
    <property type="protein sequence ID" value="BAD40486.1"/>
    <property type="molecule type" value="Genomic_DNA"/>
</dbReference>
<dbReference type="RefSeq" id="WP_011195631.1">
    <property type="nucleotide sequence ID" value="NC_006177.1"/>
</dbReference>
<dbReference type="SMR" id="Q67PA7"/>
<dbReference type="STRING" id="292459.STH1501"/>
<dbReference type="KEGG" id="sth:STH1501"/>
<dbReference type="eggNOG" id="COG0821">
    <property type="taxonomic scope" value="Bacteria"/>
</dbReference>
<dbReference type="HOGENOM" id="CLU_042258_0_0_9"/>
<dbReference type="OrthoDB" id="9803214at2"/>
<dbReference type="UniPathway" id="UPA00056">
    <property type="reaction ID" value="UER00096"/>
</dbReference>
<dbReference type="Proteomes" id="UP000000417">
    <property type="component" value="Chromosome"/>
</dbReference>
<dbReference type="GO" id="GO:0051539">
    <property type="term" value="F:4 iron, 4 sulfur cluster binding"/>
    <property type="evidence" value="ECO:0007669"/>
    <property type="project" value="UniProtKB-UniRule"/>
</dbReference>
<dbReference type="GO" id="GO:0046429">
    <property type="term" value="F:4-hydroxy-3-methylbut-2-en-1-yl diphosphate synthase activity (ferredoxin)"/>
    <property type="evidence" value="ECO:0007669"/>
    <property type="project" value="UniProtKB-UniRule"/>
</dbReference>
<dbReference type="GO" id="GO:0141197">
    <property type="term" value="F:4-hydroxy-3-methylbut-2-enyl-diphosphate synthase activity (flavodoxin)"/>
    <property type="evidence" value="ECO:0007669"/>
    <property type="project" value="UniProtKB-EC"/>
</dbReference>
<dbReference type="GO" id="GO:0005506">
    <property type="term" value="F:iron ion binding"/>
    <property type="evidence" value="ECO:0007669"/>
    <property type="project" value="InterPro"/>
</dbReference>
<dbReference type="GO" id="GO:0019288">
    <property type="term" value="P:isopentenyl diphosphate biosynthetic process, methylerythritol 4-phosphate pathway"/>
    <property type="evidence" value="ECO:0007669"/>
    <property type="project" value="UniProtKB-UniRule"/>
</dbReference>
<dbReference type="GO" id="GO:0016114">
    <property type="term" value="P:terpenoid biosynthetic process"/>
    <property type="evidence" value="ECO:0007669"/>
    <property type="project" value="InterPro"/>
</dbReference>
<dbReference type="FunFam" id="3.20.20.20:FF:000001">
    <property type="entry name" value="4-hydroxy-3-methylbut-2-en-1-yl diphosphate synthase (flavodoxin)"/>
    <property type="match status" value="1"/>
</dbReference>
<dbReference type="Gene3D" id="3.20.20.20">
    <property type="entry name" value="Dihydropteroate synthase-like"/>
    <property type="match status" value="1"/>
</dbReference>
<dbReference type="Gene3D" id="3.30.413.10">
    <property type="entry name" value="Sulfite Reductase Hemoprotein, domain 1"/>
    <property type="match status" value="1"/>
</dbReference>
<dbReference type="HAMAP" id="MF_00159">
    <property type="entry name" value="IspG"/>
    <property type="match status" value="1"/>
</dbReference>
<dbReference type="InterPro" id="IPR011005">
    <property type="entry name" value="Dihydropteroate_synth-like_sf"/>
</dbReference>
<dbReference type="InterPro" id="IPR016425">
    <property type="entry name" value="IspG_bac"/>
</dbReference>
<dbReference type="InterPro" id="IPR004588">
    <property type="entry name" value="IspG_bac-typ"/>
</dbReference>
<dbReference type="InterPro" id="IPR045854">
    <property type="entry name" value="NO2/SO3_Rdtase_4Fe4S_sf"/>
</dbReference>
<dbReference type="NCBIfam" id="TIGR00612">
    <property type="entry name" value="ispG_gcpE"/>
    <property type="match status" value="1"/>
</dbReference>
<dbReference type="NCBIfam" id="NF001540">
    <property type="entry name" value="PRK00366.1"/>
    <property type="match status" value="1"/>
</dbReference>
<dbReference type="PANTHER" id="PTHR30454">
    <property type="entry name" value="4-HYDROXY-3-METHYLBUT-2-EN-1-YL DIPHOSPHATE SYNTHASE"/>
    <property type="match status" value="1"/>
</dbReference>
<dbReference type="PANTHER" id="PTHR30454:SF0">
    <property type="entry name" value="4-HYDROXY-3-METHYLBUT-2-EN-1-YL DIPHOSPHATE SYNTHASE (FERREDOXIN), CHLOROPLASTIC"/>
    <property type="match status" value="1"/>
</dbReference>
<dbReference type="Pfam" id="PF04551">
    <property type="entry name" value="GcpE"/>
    <property type="match status" value="1"/>
</dbReference>
<dbReference type="PIRSF" id="PIRSF004640">
    <property type="entry name" value="IspG"/>
    <property type="match status" value="1"/>
</dbReference>
<dbReference type="SUPFAM" id="SSF51717">
    <property type="entry name" value="Dihydropteroate synthetase-like"/>
    <property type="match status" value="1"/>
</dbReference>
<dbReference type="SUPFAM" id="SSF56014">
    <property type="entry name" value="Nitrite and sulphite reductase 4Fe-4S domain-like"/>
    <property type="match status" value="1"/>
</dbReference>
<sequence length="370" mass="40241">MIERRKTRAVKVGRVQIGGGAPITVQSMTKCDTRDVPEVLRQIRALEEAGCDIVRVAAPTMEAAECFKEIRKGCNIPLVADVHFDYRIALKVLEAGIDKLRINPGNIGARWKVEEVVRACKDRGVPIRIGVNAGSLEEEFLEKYGYPTADGMVESALKHVAILEELDFHDIVISIKSSRVDQMIEAYRKLSEKVDYPLHVGVTEAGTPFAGTIKSAVGIGTILAEGIGDTIRVSLSTDCVEEVRVGYEILKALGLRTRGINIISCPSCGRVQIDLVKVANEVERRLQHIDVPLNVAVMGCVVNGPGEAAEADVALFGGKGVGMLYVGGERVRKTTEEEMVEALVELVEQKAAEIKASGRVPTGYGRHEER</sequence>
<evidence type="ECO:0000255" key="1">
    <source>
        <dbReference type="HAMAP-Rule" id="MF_00159"/>
    </source>
</evidence>
<feature type="chain" id="PRO_0000190637" description="4-hydroxy-3-methylbut-2-en-1-yl diphosphate synthase (flavodoxin)">
    <location>
        <begin position="1"/>
        <end position="370"/>
    </location>
</feature>
<feature type="binding site" evidence="1">
    <location>
        <position position="265"/>
    </location>
    <ligand>
        <name>[4Fe-4S] cluster</name>
        <dbReference type="ChEBI" id="CHEBI:49883"/>
    </ligand>
</feature>
<feature type="binding site" evidence="1">
    <location>
        <position position="268"/>
    </location>
    <ligand>
        <name>[4Fe-4S] cluster</name>
        <dbReference type="ChEBI" id="CHEBI:49883"/>
    </ligand>
</feature>
<feature type="binding site" evidence="1">
    <location>
        <position position="300"/>
    </location>
    <ligand>
        <name>[4Fe-4S] cluster</name>
        <dbReference type="ChEBI" id="CHEBI:49883"/>
    </ligand>
</feature>
<feature type="binding site" evidence="1">
    <location>
        <position position="307"/>
    </location>
    <ligand>
        <name>[4Fe-4S] cluster</name>
        <dbReference type="ChEBI" id="CHEBI:49883"/>
    </ligand>
</feature>
<accession>Q67PA7</accession>
<organism>
    <name type="scientific">Symbiobacterium thermophilum (strain DSM 24528 / JCM 14929 / IAM 14863 / T)</name>
    <dbReference type="NCBI Taxonomy" id="292459"/>
    <lineage>
        <taxon>Bacteria</taxon>
        <taxon>Bacillati</taxon>
        <taxon>Bacillota</taxon>
        <taxon>Clostridia</taxon>
        <taxon>Eubacteriales</taxon>
        <taxon>Symbiobacteriaceae</taxon>
        <taxon>Symbiobacterium</taxon>
    </lineage>
</organism>
<proteinExistence type="inferred from homology"/>
<comment type="function">
    <text evidence="1">Converts 2C-methyl-D-erythritol 2,4-cyclodiphosphate (ME-2,4cPP) into 1-hydroxy-2-methyl-2-(E)-butenyl 4-diphosphate.</text>
</comment>
<comment type="catalytic activity">
    <reaction evidence="1">
        <text>(2E)-4-hydroxy-3-methylbut-2-enyl diphosphate + oxidized [flavodoxin] + H2O + 2 H(+) = 2-C-methyl-D-erythritol 2,4-cyclic diphosphate + reduced [flavodoxin]</text>
        <dbReference type="Rhea" id="RHEA:43604"/>
        <dbReference type="Rhea" id="RHEA-COMP:10622"/>
        <dbReference type="Rhea" id="RHEA-COMP:10623"/>
        <dbReference type="ChEBI" id="CHEBI:15377"/>
        <dbReference type="ChEBI" id="CHEBI:15378"/>
        <dbReference type="ChEBI" id="CHEBI:57618"/>
        <dbReference type="ChEBI" id="CHEBI:58210"/>
        <dbReference type="ChEBI" id="CHEBI:58483"/>
        <dbReference type="ChEBI" id="CHEBI:128753"/>
        <dbReference type="EC" id="1.17.7.3"/>
    </reaction>
</comment>
<comment type="cofactor">
    <cofactor evidence="1">
        <name>[4Fe-4S] cluster</name>
        <dbReference type="ChEBI" id="CHEBI:49883"/>
    </cofactor>
    <text evidence="1">Binds 1 [4Fe-4S] cluster.</text>
</comment>
<comment type="pathway">
    <text evidence="1">Isoprenoid biosynthesis; isopentenyl diphosphate biosynthesis via DXP pathway; isopentenyl diphosphate from 1-deoxy-D-xylulose 5-phosphate: step 5/6.</text>
</comment>
<comment type="similarity">
    <text evidence="1">Belongs to the IspG family.</text>
</comment>
<protein>
    <recommendedName>
        <fullName evidence="1">4-hydroxy-3-methylbut-2-en-1-yl diphosphate synthase (flavodoxin)</fullName>
        <ecNumber evidence="1">1.17.7.3</ecNumber>
    </recommendedName>
    <alternativeName>
        <fullName evidence="1">1-hydroxy-2-methyl-2-(E)-butenyl 4-diphosphate synthase</fullName>
    </alternativeName>
</protein>
<reference key="1">
    <citation type="journal article" date="2004" name="Nucleic Acids Res.">
        <title>Genome sequence of Symbiobacterium thermophilum, an uncultivable bacterium that depends on microbial commensalism.</title>
        <authorList>
            <person name="Ueda K."/>
            <person name="Yamashita A."/>
            <person name="Ishikawa J."/>
            <person name="Shimada M."/>
            <person name="Watsuji T."/>
            <person name="Morimura K."/>
            <person name="Ikeda H."/>
            <person name="Hattori M."/>
            <person name="Beppu T."/>
        </authorList>
    </citation>
    <scope>NUCLEOTIDE SEQUENCE [LARGE SCALE GENOMIC DNA]</scope>
    <source>
        <strain>DSM 24528 / JCM 14929 / IAM 14863 / T</strain>
    </source>
</reference>
<keyword id="KW-0004">4Fe-4S</keyword>
<keyword id="KW-0408">Iron</keyword>
<keyword id="KW-0411">Iron-sulfur</keyword>
<keyword id="KW-0414">Isoprene biosynthesis</keyword>
<keyword id="KW-0479">Metal-binding</keyword>
<keyword id="KW-0560">Oxidoreductase</keyword>
<keyword id="KW-1185">Reference proteome</keyword>
<gene>
    <name evidence="1" type="primary">ispG</name>
    <name type="ordered locus">STH1501</name>
</gene>